<evidence type="ECO:0000255" key="1">
    <source>
        <dbReference type="HAMAP-Rule" id="MF_00639"/>
    </source>
</evidence>
<dbReference type="EC" id="6.3.2.9" evidence="1"/>
<dbReference type="EMBL" id="CP000264">
    <property type="protein sequence ID" value="ABD55680.1"/>
    <property type="molecule type" value="Genomic_DNA"/>
</dbReference>
<dbReference type="SMR" id="Q28NN2"/>
<dbReference type="STRING" id="290400.Jann_2763"/>
<dbReference type="KEGG" id="jan:Jann_2763"/>
<dbReference type="eggNOG" id="COG0771">
    <property type="taxonomic scope" value="Bacteria"/>
</dbReference>
<dbReference type="HOGENOM" id="CLU_032540_3_0_5"/>
<dbReference type="OrthoDB" id="9809796at2"/>
<dbReference type="UniPathway" id="UPA00219"/>
<dbReference type="Proteomes" id="UP000008326">
    <property type="component" value="Chromosome"/>
</dbReference>
<dbReference type="GO" id="GO:0005737">
    <property type="term" value="C:cytoplasm"/>
    <property type="evidence" value="ECO:0007669"/>
    <property type="project" value="UniProtKB-SubCell"/>
</dbReference>
<dbReference type="GO" id="GO:0005524">
    <property type="term" value="F:ATP binding"/>
    <property type="evidence" value="ECO:0007669"/>
    <property type="project" value="UniProtKB-UniRule"/>
</dbReference>
<dbReference type="GO" id="GO:0008764">
    <property type="term" value="F:UDP-N-acetylmuramoylalanine-D-glutamate ligase activity"/>
    <property type="evidence" value="ECO:0007669"/>
    <property type="project" value="UniProtKB-UniRule"/>
</dbReference>
<dbReference type="GO" id="GO:0051301">
    <property type="term" value="P:cell division"/>
    <property type="evidence" value="ECO:0007669"/>
    <property type="project" value="UniProtKB-KW"/>
</dbReference>
<dbReference type="GO" id="GO:0071555">
    <property type="term" value="P:cell wall organization"/>
    <property type="evidence" value="ECO:0007669"/>
    <property type="project" value="UniProtKB-KW"/>
</dbReference>
<dbReference type="GO" id="GO:0009252">
    <property type="term" value="P:peptidoglycan biosynthetic process"/>
    <property type="evidence" value="ECO:0007669"/>
    <property type="project" value="UniProtKB-UniRule"/>
</dbReference>
<dbReference type="GO" id="GO:0008360">
    <property type="term" value="P:regulation of cell shape"/>
    <property type="evidence" value="ECO:0007669"/>
    <property type="project" value="UniProtKB-KW"/>
</dbReference>
<dbReference type="Gene3D" id="3.90.190.20">
    <property type="entry name" value="Mur ligase, C-terminal domain"/>
    <property type="match status" value="1"/>
</dbReference>
<dbReference type="Gene3D" id="3.40.1190.10">
    <property type="entry name" value="Mur-like, catalytic domain"/>
    <property type="match status" value="1"/>
</dbReference>
<dbReference type="Gene3D" id="3.40.50.720">
    <property type="entry name" value="NAD(P)-binding Rossmann-like Domain"/>
    <property type="match status" value="1"/>
</dbReference>
<dbReference type="HAMAP" id="MF_00639">
    <property type="entry name" value="MurD"/>
    <property type="match status" value="1"/>
</dbReference>
<dbReference type="InterPro" id="IPR036565">
    <property type="entry name" value="Mur-like_cat_sf"/>
</dbReference>
<dbReference type="InterPro" id="IPR004101">
    <property type="entry name" value="Mur_ligase_C"/>
</dbReference>
<dbReference type="InterPro" id="IPR036615">
    <property type="entry name" value="Mur_ligase_C_dom_sf"/>
</dbReference>
<dbReference type="InterPro" id="IPR013221">
    <property type="entry name" value="Mur_ligase_cen"/>
</dbReference>
<dbReference type="InterPro" id="IPR005762">
    <property type="entry name" value="MurD"/>
</dbReference>
<dbReference type="NCBIfam" id="TIGR01087">
    <property type="entry name" value="murD"/>
    <property type="match status" value="1"/>
</dbReference>
<dbReference type="PANTHER" id="PTHR43692">
    <property type="entry name" value="UDP-N-ACETYLMURAMOYLALANINE--D-GLUTAMATE LIGASE"/>
    <property type="match status" value="1"/>
</dbReference>
<dbReference type="PANTHER" id="PTHR43692:SF1">
    <property type="entry name" value="UDP-N-ACETYLMURAMOYLALANINE--D-GLUTAMATE LIGASE"/>
    <property type="match status" value="1"/>
</dbReference>
<dbReference type="Pfam" id="PF02875">
    <property type="entry name" value="Mur_ligase_C"/>
    <property type="match status" value="1"/>
</dbReference>
<dbReference type="Pfam" id="PF08245">
    <property type="entry name" value="Mur_ligase_M"/>
    <property type="match status" value="1"/>
</dbReference>
<dbReference type="SUPFAM" id="SSF51984">
    <property type="entry name" value="MurCD N-terminal domain"/>
    <property type="match status" value="1"/>
</dbReference>
<dbReference type="SUPFAM" id="SSF53623">
    <property type="entry name" value="MurD-like peptide ligases, catalytic domain"/>
    <property type="match status" value="1"/>
</dbReference>
<dbReference type="SUPFAM" id="SSF53244">
    <property type="entry name" value="MurD-like peptide ligases, peptide-binding domain"/>
    <property type="match status" value="1"/>
</dbReference>
<keyword id="KW-0067">ATP-binding</keyword>
<keyword id="KW-0131">Cell cycle</keyword>
<keyword id="KW-0132">Cell division</keyword>
<keyword id="KW-0133">Cell shape</keyword>
<keyword id="KW-0961">Cell wall biogenesis/degradation</keyword>
<keyword id="KW-0963">Cytoplasm</keyword>
<keyword id="KW-0436">Ligase</keyword>
<keyword id="KW-0547">Nucleotide-binding</keyword>
<keyword id="KW-0573">Peptidoglycan synthesis</keyword>
<keyword id="KW-1185">Reference proteome</keyword>
<protein>
    <recommendedName>
        <fullName evidence="1">UDP-N-acetylmuramoylalanine--D-glutamate ligase</fullName>
        <ecNumber evidence="1">6.3.2.9</ecNumber>
    </recommendedName>
    <alternativeName>
        <fullName evidence="1">D-glutamic acid-adding enzyme</fullName>
    </alternativeName>
    <alternativeName>
        <fullName evidence="1">UDP-N-acetylmuramoyl-L-alanyl-D-glutamate synthetase</fullName>
    </alternativeName>
</protein>
<gene>
    <name evidence="1" type="primary">murD</name>
    <name type="ordered locus">Jann_2763</name>
</gene>
<organism>
    <name type="scientific">Jannaschia sp. (strain CCS1)</name>
    <dbReference type="NCBI Taxonomy" id="290400"/>
    <lineage>
        <taxon>Bacteria</taxon>
        <taxon>Pseudomonadati</taxon>
        <taxon>Pseudomonadota</taxon>
        <taxon>Alphaproteobacteria</taxon>
        <taxon>Rhodobacterales</taxon>
        <taxon>Roseobacteraceae</taxon>
        <taxon>Jannaschia</taxon>
    </lineage>
</organism>
<proteinExistence type="inferred from homology"/>
<feature type="chain" id="PRO_0000257196" description="UDP-N-acetylmuramoylalanine--D-glutamate ligase">
    <location>
        <begin position="1"/>
        <end position="460"/>
    </location>
</feature>
<feature type="binding site" evidence="1">
    <location>
        <begin position="122"/>
        <end position="128"/>
    </location>
    <ligand>
        <name>ATP</name>
        <dbReference type="ChEBI" id="CHEBI:30616"/>
    </ligand>
</feature>
<name>MURD_JANSC</name>
<reference key="1">
    <citation type="submission" date="2006-02" db="EMBL/GenBank/DDBJ databases">
        <title>Complete sequence of chromosome of Jannaschia sp. CCS1.</title>
        <authorList>
            <consortium name="US DOE Joint Genome Institute"/>
            <person name="Copeland A."/>
            <person name="Lucas S."/>
            <person name="Lapidus A."/>
            <person name="Barry K."/>
            <person name="Detter J.C."/>
            <person name="Glavina del Rio T."/>
            <person name="Hammon N."/>
            <person name="Israni S."/>
            <person name="Pitluck S."/>
            <person name="Brettin T."/>
            <person name="Bruce D."/>
            <person name="Han C."/>
            <person name="Tapia R."/>
            <person name="Gilna P."/>
            <person name="Chertkov O."/>
            <person name="Saunders E."/>
            <person name="Schmutz J."/>
            <person name="Larimer F."/>
            <person name="Land M."/>
            <person name="Kyrpides N."/>
            <person name="Lykidis A."/>
            <person name="Moran M.A."/>
            <person name="Belas R."/>
            <person name="Ye W."/>
            <person name="Buchan A."/>
            <person name="Gonzalez J.M."/>
            <person name="Schell M.A."/>
            <person name="Richardson P."/>
        </authorList>
    </citation>
    <scope>NUCLEOTIDE SEQUENCE [LARGE SCALE GENOMIC DNA]</scope>
    <source>
        <strain>CCS1</strain>
    </source>
</reference>
<accession>Q28NN2</accession>
<sequence length="460" mass="48293">MGFVGRKVVVLGLGRSGLASARALREGGAEALCWDDGEAGRARAAAEGFTIHDPIRDGLDGVACLVTSPGIPHLYSTPHRAIVAAYAAGVPVDNDIGLFFRSLGQGDWAFHDTPPRVVAVTGSNGKSTTSALIAHILEEAGTPVQLAGNIGRGVLDIEPPIDGEVIVIELSSYQTELARALTPDIAVFTNLSADHLERHGGMGGYFAAKRRLFSEGGPERAVIGVDEIEGQYLAGQLVEGPEDGRLIRVSSGKLSGPGWDVSTRKGWLSEFRKGRQAASIDLRGVPGLPGAHNHQNAACAYGVCRALGLAPRVIEAAFATFEGLPHRSQRVAEINGVFYVNDSKATNVDAATKALGAFKRIRWICGGLEKDGGLEALWEAAGHVAKAYVIGREAEAFALHLGDIPKDVCGDMATAVARASADAQPGDTVLLAPAAASFDQYDSFETRGADFIAQVEKLQS</sequence>
<comment type="function">
    <text evidence="1">Cell wall formation. Catalyzes the addition of glutamate to the nucleotide precursor UDP-N-acetylmuramoyl-L-alanine (UMA).</text>
</comment>
<comment type="catalytic activity">
    <reaction evidence="1">
        <text>UDP-N-acetyl-alpha-D-muramoyl-L-alanine + D-glutamate + ATP = UDP-N-acetyl-alpha-D-muramoyl-L-alanyl-D-glutamate + ADP + phosphate + H(+)</text>
        <dbReference type="Rhea" id="RHEA:16429"/>
        <dbReference type="ChEBI" id="CHEBI:15378"/>
        <dbReference type="ChEBI" id="CHEBI:29986"/>
        <dbReference type="ChEBI" id="CHEBI:30616"/>
        <dbReference type="ChEBI" id="CHEBI:43474"/>
        <dbReference type="ChEBI" id="CHEBI:83898"/>
        <dbReference type="ChEBI" id="CHEBI:83900"/>
        <dbReference type="ChEBI" id="CHEBI:456216"/>
        <dbReference type="EC" id="6.3.2.9"/>
    </reaction>
</comment>
<comment type="pathway">
    <text evidence="1">Cell wall biogenesis; peptidoglycan biosynthesis.</text>
</comment>
<comment type="subcellular location">
    <subcellularLocation>
        <location evidence="1">Cytoplasm</location>
    </subcellularLocation>
</comment>
<comment type="similarity">
    <text evidence="1">Belongs to the MurCDEF family.</text>
</comment>